<accession>Q9ZVC2</accession>
<accession>Q84WN1</accession>
<dbReference type="EMBL" id="AY928830">
    <property type="protein sequence ID" value="AAX22759.1"/>
    <property type="molecule type" value="mRNA"/>
</dbReference>
<dbReference type="EMBL" id="AC005662">
    <property type="protein sequence ID" value="AAC78536.1"/>
    <property type="molecule type" value="Genomic_DNA"/>
</dbReference>
<dbReference type="EMBL" id="CP002685">
    <property type="protein sequence ID" value="AEC09966.1"/>
    <property type="molecule type" value="Genomic_DNA"/>
</dbReference>
<dbReference type="EMBL" id="BT002986">
    <property type="protein sequence ID" value="AAO22795.1"/>
    <property type="molecule type" value="mRNA"/>
</dbReference>
<dbReference type="EMBL" id="BT015773">
    <property type="protein sequence ID" value="AAU90063.1"/>
    <property type="molecule type" value="mRNA"/>
</dbReference>
<dbReference type="PIR" id="H84840">
    <property type="entry name" value="H84840"/>
</dbReference>
<dbReference type="RefSeq" id="NP_181668.1">
    <property type="nucleotide sequence ID" value="NM_129700.3"/>
</dbReference>
<dbReference type="SMR" id="Q9ZVC2"/>
<dbReference type="BioGRID" id="4072">
    <property type="interactions" value="5"/>
</dbReference>
<dbReference type="FunCoup" id="Q9ZVC2">
    <property type="interactions" value="299"/>
</dbReference>
<dbReference type="IntAct" id="Q9ZVC2">
    <property type="interactions" value="4"/>
</dbReference>
<dbReference type="STRING" id="3702.Q9ZVC2"/>
<dbReference type="iPTMnet" id="Q9ZVC2"/>
<dbReference type="PaxDb" id="3702-AT2G41370.1"/>
<dbReference type="ProteomicsDB" id="250515"/>
<dbReference type="EnsemblPlants" id="AT2G41370.1">
    <property type="protein sequence ID" value="AT2G41370.1"/>
    <property type="gene ID" value="AT2G41370"/>
</dbReference>
<dbReference type="GeneID" id="818735"/>
<dbReference type="Gramene" id="AT2G41370.1">
    <property type="protein sequence ID" value="AT2G41370.1"/>
    <property type="gene ID" value="AT2G41370"/>
</dbReference>
<dbReference type="KEGG" id="ath:AT2G41370"/>
<dbReference type="Araport" id="AT2G41370"/>
<dbReference type="TAIR" id="AT2G41370">
    <property type="gene designation" value="BOP2"/>
</dbReference>
<dbReference type="eggNOG" id="KOG0504">
    <property type="taxonomic scope" value="Eukaryota"/>
</dbReference>
<dbReference type="HOGENOM" id="CLU_028148_0_0_1"/>
<dbReference type="InParanoid" id="Q9ZVC2"/>
<dbReference type="OMA" id="FHVEGHL"/>
<dbReference type="PhylomeDB" id="Q9ZVC2"/>
<dbReference type="UniPathway" id="UPA00143"/>
<dbReference type="PRO" id="PR:Q9ZVC2"/>
<dbReference type="Proteomes" id="UP000006548">
    <property type="component" value="Chromosome 2"/>
</dbReference>
<dbReference type="ExpressionAtlas" id="Q9ZVC2">
    <property type="expression patterns" value="baseline and differential"/>
</dbReference>
<dbReference type="GO" id="GO:0005737">
    <property type="term" value="C:cytoplasm"/>
    <property type="evidence" value="ECO:0000314"/>
    <property type="project" value="TAIR"/>
</dbReference>
<dbReference type="GO" id="GO:0005634">
    <property type="term" value="C:nucleus"/>
    <property type="evidence" value="ECO:0000314"/>
    <property type="project" value="TAIR"/>
</dbReference>
<dbReference type="GO" id="GO:0000976">
    <property type="term" value="F:transcription cis-regulatory region binding"/>
    <property type="evidence" value="ECO:0000353"/>
    <property type="project" value="TAIR"/>
</dbReference>
<dbReference type="GO" id="GO:0008270">
    <property type="term" value="F:zinc ion binding"/>
    <property type="evidence" value="ECO:0007669"/>
    <property type="project" value="UniProtKB-KW"/>
</dbReference>
<dbReference type="GO" id="GO:0010434">
    <property type="term" value="P:bract formation"/>
    <property type="evidence" value="ECO:0000316"/>
    <property type="project" value="UniProtKB"/>
</dbReference>
<dbReference type="GO" id="GO:0010582">
    <property type="term" value="P:floral meristem determinacy"/>
    <property type="evidence" value="ECO:0000316"/>
    <property type="project" value="TAIR"/>
</dbReference>
<dbReference type="GO" id="GO:0010227">
    <property type="term" value="P:floral organ abscission"/>
    <property type="evidence" value="ECO:0000316"/>
    <property type="project" value="UniProtKB"/>
</dbReference>
<dbReference type="GO" id="GO:0048439">
    <property type="term" value="P:flower morphogenesis"/>
    <property type="evidence" value="ECO:0000316"/>
    <property type="project" value="TAIR"/>
</dbReference>
<dbReference type="GO" id="GO:0009864">
    <property type="term" value="P:induced systemic resistance, jasmonic acid mediated signaling pathway"/>
    <property type="evidence" value="ECO:0000316"/>
    <property type="project" value="TAIR"/>
</dbReference>
<dbReference type="GO" id="GO:0009944">
    <property type="term" value="P:polarity specification of adaxial/abaxial axis"/>
    <property type="evidence" value="ECO:0000316"/>
    <property type="project" value="TAIR"/>
</dbReference>
<dbReference type="GO" id="GO:0016567">
    <property type="term" value="P:protein ubiquitination"/>
    <property type="evidence" value="ECO:0007669"/>
    <property type="project" value="UniProtKB-UniPathway"/>
</dbReference>
<dbReference type="GO" id="GO:0009954">
    <property type="term" value="P:proximal/distal pattern formation"/>
    <property type="evidence" value="ECO:0000316"/>
    <property type="project" value="TAIR"/>
</dbReference>
<dbReference type="CDD" id="cd18310">
    <property type="entry name" value="BTB_POZ_NPR_plant"/>
    <property type="match status" value="1"/>
</dbReference>
<dbReference type="FunFam" id="3.30.710.10:FF:000084">
    <property type="entry name" value="regulatory protein NPR5 isoform X1"/>
    <property type="match status" value="1"/>
</dbReference>
<dbReference type="FunFam" id="1.25.40.20:FF:000058">
    <property type="entry name" value="regulatory protein NPR5 isoform X2"/>
    <property type="match status" value="1"/>
</dbReference>
<dbReference type="Gene3D" id="1.25.40.20">
    <property type="entry name" value="Ankyrin repeat-containing domain"/>
    <property type="match status" value="1"/>
</dbReference>
<dbReference type="Gene3D" id="3.30.710.10">
    <property type="entry name" value="Potassium Channel Kv1.1, Chain A"/>
    <property type="match status" value="1"/>
</dbReference>
<dbReference type="InterPro" id="IPR002110">
    <property type="entry name" value="Ankyrin_rpt"/>
</dbReference>
<dbReference type="InterPro" id="IPR036770">
    <property type="entry name" value="Ankyrin_rpt-contain_sf"/>
</dbReference>
<dbReference type="InterPro" id="IPR000210">
    <property type="entry name" value="BTB/POZ_dom"/>
</dbReference>
<dbReference type="InterPro" id="IPR044284">
    <property type="entry name" value="NPR5/6"/>
</dbReference>
<dbReference type="InterPro" id="IPR024228">
    <property type="entry name" value="NPR_central_dom"/>
</dbReference>
<dbReference type="InterPro" id="IPR011333">
    <property type="entry name" value="SKP1/BTB/POZ_sf"/>
</dbReference>
<dbReference type="PANTHER" id="PTHR46668">
    <property type="entry name" value="BTB/POZ DOMAIN AND ANKYRIN REPEAT-CONTAINING PROTEIN NH5.2"/>
    <property type="match status" value="1"/>
</dbReference>
<dbReference type="PANTHER" id="PTHR46668:SF1">
    <property type="entry name" value="REGULATORY PROTEIN NPR5"/>
    <property type="match status" value="1"/>
</dbReference>
<dbReference type="Pfam" id="PF12796">
    <property type="entry name" value="Ank_2"/>
    <property type="match status" value="1"/>
</dbReference>
<dbReference type="Pfam" id="PF00651">
    <property type="entry name" value="BTB"/>
    <property type="match status" value="1"/>
</dbReference>
<dbReference type="Pfam" id="PF11900">
    <property type="entry name" value="DUF3420"/>
    <property type="match status" value="1"/>
</dbReference>
<dbReference type="SMART" id="SM00248">
    <property type="entry name" value="ANK"/>
    <property type="match status" value="2"/>
</dbReference>
<dbReference type="SMART" id="SM00225">
    <property type="entry name" value="BTB"/>
    <property type="match status" value="1"/>
</dbReference>
<dbReference type="SUPFAM" id="SSF48403">
    <property type="entry name" value="Ankyrin repeat"/>
    <property type="match status" value="1"/>
</dbReference>
<dbReference type="SUPFAM" id="SSF54695">
    <property type="entry name" value="POZ domain"/>
    <property type="match status" value="1"/>
</dbReference>
<dbReference type="PROSITE" id="PS50297">
    <property type="entry name" value="ANK_REP_REGION"/>
    <property type="match status" value="1"/>
</dbReference>
<dbReference type="PROSITE" id="PS50088">
    <property type="entry name" value="ANK_REPEAT"/>
    <property type="match status" value="1"/>
</dbReference>
<dbReference type="PROSITE" id="PS50097">
    <property type="entry name" value="BTB"/>
    <property type="match status" value="1"/>
</dbReference>
<dbReference type="PROSITE" id="PS52046">
    <property type="entry name" value="ZF_C2HC_NPR"/>
    <property type="match status" value="1"/>
</dbReference>
<proteinExistence type="evidence at protein level"/>
<organism>
    <name type="scientific">Arabidopsis thaliana</name>
    <name type="common">Mouse-ear cress</name>
    <dbReference type="NCBI Taxonomy" id="3702"/>
    <lineage>
        <taxon>Eukaryota</taxon>
        <taxon>Viridiplantae</taxon>
        <taxon>Streptophyta</taxon>
        <taxon>Embryophyta</taxon>
        <taxon>Tracheophyta</taxon>
        <taxon>Spermatophyta</taxon>
        <taxon>Magnoliopsida</taxon>
        <taxon>eudicotyledons</taxon>
        <taxon>Gunneridae</taxon>
        <taxon>Pentapetalae</taxon>
        <taxon>rosids</taxon>
        <taxon>malvids</taxon>
        <taxon>Brassicales</taxon>
        <taxon>Brassicaceae</taxon>
        <taxon>Camelineae</taxon>
        <taxon>Arabidopsis</taxon>
    </lineage>
</organism>
<sequence>MSNLEESLRSLSLDFLNLLINGQAFSDVTFSVEGRLVHAHRCILAARSLFFRKFFCGTDSPQPVTGIDPTQHGSVPASPTRGSTAPAGIIPVNSVGYEVFLLLLQFLYSGQVSIVPQKHEPRPNCGERGCWHTHCSAAVDLALDTLAASRYFGVEQLALLTQKQLASMVEKASIEDVMKVLIASRKQDMHQLWTTCSHLVAKSGLPPEILAKHLPIDVVTKIEELRLKSSIARRSLMPHNHHHDLSVAQDLEDQKIRRMRRALDSSDVELVKLMVMGEGLNLDESLALHYAVESCSREVVKALLELGAADVNYPAGPAGKTPLHIAAEMVSPDMVAVLLDHHADPNVRTVGGITPLDILRTLTSDFLFKGAVPGLTHIEPNKLRLCLELVQSAAMVISREEGNNSNNQNNDNNTGIYPHMNEEHNSGSSGGSNNNLDSRLVYLNLGAGTGQMGPGRDQGDDHNSQREGMSRHHHHHQDPSTMYHHHHQHHF</sequence>
<name>NPR5_ARATH</name>
<feature type="chain" id="PRO_0000407994" description="Regulatory protein NPR5">
    <location>
        <begin position="1"/>
        <end position="491"/>
    </location>
</feature>
<feature type="domain" description="BTB" evidence="3">
    <location>
        <begin position="26"/>
        <end position="116"/>
    </location>
</feature>
<feature type="repeat" description="ANK 1" evidence="2">
    <location>
        <begin position="254"/>
        <end position="283"/>
    </location>
</feature>
<feature type="repeat" description="ANK 2" evidence="2">
    <location>
        <begin position="284"/>
        <end position="313"/>
    </location>
</feature>
<feature type="repeat" description="ANK 3" evidence="2">
    <location>
        <begin position="318"/>
        <end position="347"/>
    </location>
</feature>
<feature type="repeat" description="ANK 4" evidence="17">
    <location>
        <begin position="351"/>
        <end position="385"/>
    </location>
</feature>
<feature type="zinc finger region" description="C2HC NPR-type" evidence="4">
    <location>
        <begin position="122"/>
        <end position="136"/>
    </location>
</feature>
<feature type="region of interest" description="Disordered" evidence="5">
    <location>
        <begin position="400"/>
        <end position="491"/>
    </location>
</feature>
<feature type="compositionally biased region" description="Low complexity" evidence="5">
    <location>
        <begin position="403"/>
        <end position="413"/>
    </location>
</feature>
<feature type="compositionally biased region" description="Basic and acidic residues" evidence="5">
    <location>
        <begin position="457"/>
        <end position="470"/>
    </location>
</feature>
<feature type="binding site" evidence="4">
    <location>
        <position position="125"/>
    </location>
    <ligand>
        <name>Zn(2+)</name>
        <dbReference type="ChEBI" id="CHEBI:29105"/>
    </ligand>
</feature>
<feature type="binding site" evidence="4">
    <location>
        <position position="130"/>
    </location>
    <ligand>
        <name>Zn(2+)</name>
        <dbReference type="ChEBI" id="CHEBI:29105"/>
    </ligand>
</feature>
<feature type="binding site" evidence="4">
    <location>
        <position position="132"/>
    </location>
    <ligand>
        <name>Zn(2+)</name>
        <dbReference type="ChEBI" id="CHEBI:29105"/>
    </ligand>
</feature>
<feature type="binding site" evidence="4">
    <location>
        <position position="135"/>
    </location>
    <ligand>
        <name>Zn(2+)</name>
        <dbReference type="ChEBI" id="CHEBI:29105"/>
    </ligand>
</feature>
<feature type="sequence conflict" description="In Ref. 4; AAO22795." evidence="17" ref="4">
    <original>C</original>
    <variation>R</variation>
    <location>
        <position position="386"/>
    </location>
</feature>
<reference key="1">
    <citation type="journal article" date="2005" name="Plant Cell">
        <title>BLADE-ON-PETIOLE-dependent signaling controls leaf and floral patterning in Arabidopsis.</title>
        <authorList>
            <person name="Hepworth S.R."/>
            <person name="Zhang Y."/>
            <person name="McKim S."/>
            <person name="Li X."/>
            <person name="Haughn G.W."/>
        </authorList>
    </citation>
    <scope>NUCLEOTIDE SEQUENCE [MRNA]</scope>
    <scope>FUNCTION</scope>
    <scope>DISRUPTION PHENOTYPE</scope>
    <scope>SUBCELLULAR LOCATION</scope>
    <scope>TISSUE SPECIFICITY</scope>
    <scope>INTERACTION WITH PAN</scope>
</reference>
<reference key="2">
    <citation type="journal article" date="1999" name="Nature">
        <title>Sequence and analysis of chromosome 2 of the plant Arabidopsis thaliana.</title>
        <authorList>
            <person name="Lin X."/>
            <person name="Kaul S."/>
            <person name="Rounsley S.D."/>
            <person name="Shea T.P."/>
            <person name="Benito M.-I."/>
            <person name="Town C.D."/>
            <person name="Fujii C.Y."/>
            <person name="Mason T.M."/>
            <person name="Bowman C.L."/>
            <person name="Barnstead M.E."/>
            <person name="Feldblyum T.V."/>
            <person name="Buell C.R."/>
            <person name="Ketchum K.A."/>
            <person name="Lee J.J."/>
            <person name="Ronning C.M."/>
            <person name="Koo H.L."/>
            <person name="Moffat K.S."/>
            <person name="Cronin L.A."/>
            <person name="Shen M."/>
            <person name="Pai G."/>
            <person name="Van Aken S."/>
            <person name="Umayam L."/>
            <person name="Tallon L.J."/>
            <person name="Gill J.E."/>
            <person name="Adams M.D."/>
            <person name="Carrera A.J."/>
            <person name="Creasy T.H."/>
            <person name="Goodman H.M."/>
            <person name="Somerville C.R."/>
            <person name="Copenhaver G.P."/>
            <person name="Preuss D."/>
            <person name="Nierman W.C."/>
            <person name="White O."/>
            <person name="Eisen J.A."/>
            <person name="Salzberg S.L."/>
            <person name="Fraser C.M."/>
            <person name="Venter J.C."/>
        </authorList>
    </citation>
    <scope>NUCLEOTIDE SEQUENCE [LARGE SCALE GENOMIC DNA]</scope>
    <source>
        <strain>cv. Columbia</strain>
    </source>
</reference>
<reference key="3">
    <citation type="journal article" date="2017" name="Plant J.">
        <title>Araport11: a complete reannotation of the Arabidopsis thaliana reference genome.</title>
        <authorList>
            <person name="Cheng C.Y."/>
            <person name="Krishnakumar V."/>
            <person name="Chan A.P."/>
            <person name="Thibaud-Nissen F."/>
            <person name="Schobel S."/>
            <person name="Town C.D."/>
        </authorList>
    </citation>
    <scope>GENOME REANNOTATION</scope>
    <source>
        <strain>cv. Columbia</strain>
    </source>
</reference>
<reference key="4">
    <citation type="journal article" date="2003" name="Science">
        <title>Empirical analysis of transcriptional activity in the Arabidopsis genome.</title>
        <authorList>
            <person name="Yamada K."/>
            <person name="Lim J."/>
            <person name="Dale J.M."/>
            <person name="Chen H."/>
            <person name="Shinn P."/>
            <person name="Palm C.J."/>
            <person name="Southwick A.M."/>
            <person name="Wu H.C."/>
            <person name="Kim C.J."/>
            <person name="Nguyen M."/>
            <person name="Pham P.K."/>
            <person name="Cheuk R.F."/>
            <person name="Karlin-Newmann G."/>
            <person name="Liu S.X."/>
            <person name="Lam B."/>
            <person name="Sakano H."/>
            <person name="Wu T."/>
            <person name="Yu G."/>
            <person name="Miranda M."/>
            <person name="Quach H.L."/>
            <person name="Tripp M."/>
            <person name="Chang C.H."/>
            <person name="Lee J.M."/>
            <person name="Toriumi M.J."/>
            <person name="Chan M.M."/>
            <person name="Tang C.C."/>
            <person name="Onodera C.S."/>
            <person name="Deng J.M."/>
            <person name="Akiyama K."/>
            <person name="Ansari Y."/>
            <person name="Arakawa T."/>
            <person name="Banh J."/>
            <person name="Banno F."/>
            <person name="Bowser L."/>
            <person name="Brooks S.Y."/>
            <person name="Carninci P."/>
            <person name="Chao Q."/>
            <person name="Choy N."/>
            <person name="Enju A."/>
            <person name="Goldsmith A.D."/>
            <person name="Gurjal M."/>
            <person name="Hansen N.F."/>
            <person name="Hayashizaki Y."/>
            <person name="Johnson-Hopson C."/>
            <person name="Hsuan V.W."/>
            <person name="Iida K."/>
            <person name="Karnes M."/>
            <person name="Khan S."/>
            <person name="Koesema E."/>
            <person name="Ishida J."/>
            <person name="Jiang P.X."/>
            <person name="Jones T."/>
            <person name="Kawai J."/>
            <person name="Kamiya A."/>
            <person name="Meyers C."/>
            <person name="Nakajima M."/>
            <person name="Narusaka M."/>
            <person name="Seki M."/>
            <person name="Sakurai T."/>
            <person name="Satou M."/>
            <person name="Tamse R."/>
            <person name="Vaysberg M."/>
            <person name="Wallender E.K."/>
            <person name="Wong C."/>
            <person name="Yamamura Y."/>
            <person name="Yuan S."/>
            <person name="Shinozaki K."/>
            <person name="Davis R.W."/>
            <person name="Theologis A."/>
            <person name="Ecker J.R."/>
        </authorList>
    </citation>
    <scope>NUCLEOTIDE SEQUENCE [LARGE SCALE MRNA]</scope>
    <source>
        <strain>cv. Columbia</strain>
    </source>
</reference>
<reference key="5">
    <citation type="submission" date="2004-10" db="EMBL/GenBank/DDBJ databases">
        <title>Arabidopsis ORF clones.</title>
        <authorList>
            <person name="Shinn P."/>
            <person name="Chen H."/>
            <person name="Cheuk R.F."/>
            <person name="Kim C.J."/>
            <person name="Ecker J.R."/>
        </authorList>
    </citation>
    <scope>NUCLEOTIDE SEQUENCE [LARGE SCALE MRNA]</scope>
    <source>
        <strain>cv. Columbia</strain>
    </source>
</reference>
<reference key="6">
    <citation type="journal article" date="2005" name="Development">
        <title>The BLADE ON PETIOLE genes act redundantly to control the growth and development of lateral organs.</title>
        <authorList>
            <person name="Norberg M."/>
            <person name="Holmlund M."/>
            <person name="Nilsson O."/>
        </authorList>
    </citation>
    <scope>FUNCTION</scope>
    <scope>DISRUPTION PHENOTYPE</scope>
    <scope>DEVELOPMENTAL STAGE</scope>
</reference>
<reference key="7">
    <citation type="journal article" date="2005" name="J. Biol. Chem.">
        <title>Cullins 3a and 3b assemble with members of the broad complex/tramtrack/bric-a-brac (BTB) protein family to form essential ubiquitin-protein ligases (E3s) in Arabidopsis.</title>
        <authorList>
            <person name="Gingerich D.J."/>
            <person name="Gagne J.M."/>
            <person name="Salter D.W."/>
            <person name="Hellmann H."/>
            <person name="Estelle M."/>
            <person name="Ma L."/>
            <person name="Vierstra R.D."/>
        </authorList>
    </citation>
    <scope>DOMAIN BTB</scope>
</reference>
<reference key="8">
    <citation type="journal article" date="2005" name="Plant J.">
        <title>An Arabidopsis NPR1-like gene, NPR4, is required for disease resistance.</title>
        <authorList>
            <person name="Liu G."/>
            <person name="Holub E.B."/>
            <person name="Alonso J.M."/>
            <person name="Ecker J.R."/>
            <person name="Fobert P.R."/>
        </authorList>
    </citation>
    <scope>GENE FAMILY</scope>
    <scope>NOMENCLATURE</scope>
</reference>
<reference key="9">
    <citation type="journal article" date="2007" name="Plant Cell">
        <title>BLADE-ON-PETIOLE 1 and 2 control Arabidopsis lateral organ fate through regulation of LOB domain and adaxial-abaxial polarity genes.</title>
        <authorList>
            <person name="Ha C.M."/>
            <person name="Jun J.H."/>
            <person name="Nam H.G."/>
            <person name="Fletcher J.C."/>
        </authorList>
    </citation>
    <scope>FUNCTION</scope>
    <scope>DISRUPTION PHENOTYPE</scope>
</reference>
<reference key="10">
    <citation type="journal article" date="2008" name="Development">
        <title>The BLADE-ON-PETIOLE genes are essential for abscission zone formation in Arabidopsis.</title>
        <authorList>
            <person name="McKim S.M."/>
            <person name="Stenvik G.E."/>
            <person name="Butenko M.A."/>
            <person name="Kristiansen W."/>
            <person name="Cho S.K."/>
            <person name="Hepworth S.R."/>
            <person name="Aalen R.B."/>
            <person name="Haughn G.W."/>
        </authorList>
    </citation>
    <scope>FUNCTION</scope>
    <scope>DISRUPTION PHENOTYPE</scope>
</reference>
<reference key="11">
    <citation type="journal article" date="2010" name="Genetics">
        <title>Control of Arabidopsis leaf morphogenesis through regulation of the YABBY and KNOX families of transcription factors.</title>
        <authorList>
            <person name="Ha C.M."/>
            <person name="Jun J.H."/>
            <person name="Fletcher J.C."/>
        </authorList>
    </citation>
    <scope>FUNCTION</scope>
</reference>
<reference key="12">
    <citation type="journal article" date="2010" name="Plant Cell">
        <title>BLADE-ON-PETIOLE1 coordinates organ determinacy and axial polarity in arabidopsis by directly activating ASYMMETRIC LEAVES2.</title>
        <authorList>
            <person name="Jun J.H."/>
            <person name="Ha C.M."/>
            <person name="Fletcher J.C."/>
        </authorList>
    </citation>
    <scope>FUNCTION</scope>
    <scope>SUBUNIT</scope>
</reference>
<reference key="13">
    <citation type="journal article" date="2010" name="Plant J.">
        <title>Arabidopsis BLADE-ON-PETIOLE1 and 2 promote floral meristem fate and determinacy in a previously undefined pathway targeting APETALA1 and AGAMOUS-LIKE24.</title>
        <authorList>
            <person name="Xu M."/>
            <person name="Hu T."/>
            <person name="McKim S.M."/>
            <person name="Murmu J."/>
            <person name="Haughn G.W."/>
            <person name="Hepworth S.R."/>
        </authorList>
    </citation>
    <scope>FUNCTION</scope>
</reference>
<reference key="14">
    <citation type="journal article" date="2015" name="PLoS Genet.">
        <title>HANABA TARANU (HAN) bridges meristem and organ primordia boundaries through PINHEAD, JAGGED, BLADE-ON-PETIOLE2 and CYTOKININ OXIDASE 3 during flower development in Arabidopsis.</title>
        <authorList>
            <person name="Ding L."/>
            <person name="Yan S."/>
            <person name="Jiang L."/>
            <person name="Zhao W."/>
            <person name="Ning K."/>
            <person name="Zhao J."/>
            <person name="Liu X."/>
            <person name="Zhang J."/>
            <person name="Wang Q."/>
            <person name="Zhang X."/>
        </authorList>
    </citation>
    <scope>INDUCTION BY GATA18/HAN</scope>
    <scope>TISSUE SPECIFICITY</scope>
</reference>
<gene>
    <name evidence="15" type="primary">NPR5</name>
    <name evidence="16" type="synonym">BOP2</name>
    <name evidence="18" type="ordered locus">At2g41370</name>
    <name evidence="19" type="ORF">F13H10.8</name>
</gene>
<comment type="function">
    <text evidence="1 7 8 9 10 11 12 13">May act as a substrate-specific adapter of an E3 ubiquitin-protein ligase complex (CUL3-RBX1-BTB) which mediates the ubiquitination and subsequent proteasomal degradation of target proteins (By similarity). Acts redundantly with BOP2. BOP1/2 promote leaf and floral meristem fate and determinacy in a pathway targeting AP1 and AGL24. BOP1/2 act as transcriptional co-regulators through direct interaction with TGA factors, including PAN, a direct regulator of AP1. Controls lateral organ fate through positive regulation of adaxial-abaxial polarity genes ATHB-14/PHB, YAB1/FIL and YAB3, and through positive regulation of LOB domain-containing genes LOB, LBD6/AS2 and LBD36. Promotes and maintains a developmentally determinate state in leaf cells through the negative regulation of JAG, JGL and class I KNOX genes. Is also involved in nectary development, formation of normal abscission zones (AZs) and suppression of bract formation, probably by regulating the cell wall disorganization.</text>
</comment>
<comment type="pathway">
    <text evidence="1">Protein modification; protein ubiquitination.</text>
</comment>
<comment type="subunit">
    <text evidence="8 11">Homodimer or heterodimer with BOP1. Interacts with PAN.</text>
</comment>
<comment type="subcellular location">
    <subcellularLocation>
        <location evidence="8">Cytoplasm</location>
    </subcellularLocation>
    <subcellularLocation>
        <location evidence="8">Nucleus</location>
    </subcellularLocation>
</comment>
<comment type="tissue specificity">
    <text evidence="8 14">Highly expressed in young floral meristem (PubMed:15805484). Predominantly expressed in the boundary between floral meristem (FM) and sepal primordia (PubMed:26390296).</text>
</comment>
<comment type="developmental stage">
    <text evidence="7">Expressed during vegetative development in young leaf primordia and at the base of the rosette leaves on the adaxial side. Expressed during reproductive development in young floral buds, and at the base of the sepals and petals.</text>
</comment>
<comment type="induction">
    <text evidence="14">Activated by GATA18/HAN.</text>
</comment>
<comment type="domain">
    <text evidence="6">The BTB/POZ domain mediates the interaction with some component of ubiquitin ligase complexes.</text>
</comment>
<comment type="disruption phenotype">
    <text evidence="7 8 9 10">Defects in inflorescence and flower development. Bop1 and bop2 double mutant displays leafy petioles, loss of floral organ abscission, and asymmetric flowers subtended by a bract.</text>
</comment>
<comment type="similarity">
    <text evidence="17">Belongs to the plant 'ANKYRIN-BTB/POZ' family. 'NOOT-BOP-COCH-like' (NBCL) subfamily.</text>
</comment>
<evidence type="ECO:0000250" key="1">
    <source>
        <dbReference type="UniProtKB" id="O22286"/>
    </source>
</evidence>
<evidence type="ECO:0000255" key="2"/>
<evidence type="ECO:0000255" key="3">
    <source>
        <dbReference type="PROSITE-ProRule" id="PRU00037"/>
    </source>
</evidence>
<evidence type="ECO:0000255" key="4">
    <source>
        <dbReference type="PROSITE-ProRule" id="PRU01391"/>
    </source>
</evidence>
<evidence type="ECO:0000256" key="5">
    <source>
        <dbReference type="SAM" id="MobiDB-lite"/>
    </source>
</evidence>
<evidence type="ECO:0000269" key="6">
    <source>
    </source>
</evidence>
<evidence type="ECO:0000269" key="7">
    <source>
    </source>
</evidence>
<evidence type="ECO:0000269" key="8">
    <source>
    </source>
</evidence>
<evidence type="ECO:0000269" key="9">
    <source>
    </source>
</evidence>
<evidence type="ECO:0000269" key="10">
    <source>
    </source>
</evidence>
<evidence type="ECO:0000269" key="11">
    <source>
    </source>
</evidence>
<evidence type="ECO:0000269" key="12">
    <source>
    </source>
</evidence>
<evidence type="ECO:0000269" key="13">
    <source>
    </source>
</evidence>
<evidence type="ECO:0000269" key="14">
    <source>
    </source>
</evidence>
<evidence type="ECO:0000303" key="15">
    <source>
    </source>
</evidence>
<evidence type="ECO:0000303" key="16">
    <source>
    </source>
</evidence>
<evidence type="ECO:0000305" key="17"/>
<evidence type="ECO:0000312" key="18">
    <source>
        <dbReference type="Araport" id="AT2G41370"/>
    </source>
</evidence>
<evidence type="ECO:0000312" key="19">
    <source>
        <dbReference type="EMBL" id="AAC78536.1"/>
    </source>
</evidence>
<protein>
    <recommendedName>
        <fullName evidence="15">Regulatory protein NPR5</fullName>
    </recommendedName>
    <alternativeName>
        <fullName evidence="15">BTB/POZ domain-containing protein NPR5</fullName>
    </alternativeName>
    <alternativeName>
        <fullName evidence="16">Protein BLADE ON PETIOLE 2</fullName>
    </alternativeName>
</protein>
<keyword id="KW-0040">ANK repeat</keyword>
<keyword id="KW-0963">Cytoplasm</keyword>
<keyword id="KW-0479">Metal-binding</keyword>
<keyword id="KW-0539">Nucleus</keyword>
<keyword id="KW-1185">Reference proteome</keyword>
<keyword id="KW-0677">Repeat</keyword>
<keyword id="KW-0833">Ubl conjugation pathway</keyword>
<keyword id="KW-0862">Zinc</keyword>
<keyword id="KW-0863">Zinc-finger</keyword>